<dbReference type="EC" id="4.3.2.10" evidence="1"/>
<dbReference type="EMBL" id="CP000479">
    <property type="protein sequence ID" value="ABK68279.1"/>
    <property type="molecule type" value="Genomic_DNA"/>
</dbReference>
<dbReference type="RefSeq" id="WP_009977378.1">
    <property type="nucleotide sequence ID" value="NC_008595.1"/>
</dbReference>
<dbReference type="SMR" id="A0QHH6"/>
<dbReference type="KEGG" id="mav:MAV_3181"/>
<dbReference type="HOGENOM" id="CLU_048577_4_0_11"/>
<dbReference type="UniPathway" id="UPA00031">
    <property type="reaction ID" value="UER00010"/>
</dbReference>
<dbReference type="Proteomes" id="UP000001574">
    <property type="component" value="Chromosome"/>
</dbReference>
<dbReference type="GO" id="GO:0005737">
    <property type="term" value="C:cytoplasm"/>
    <property type="evidence" value="ECO:0007669"/>
    <property type="project" value="UniProtKB-SubCell"/>
</dbReference>
<dbReference type="GO" id="GO:0000107">
    <property type="term" value="F:imidazoleglycerol-phosphate synthase activity"/>
    <property type="evidence" value="ECO:0007669"/>
    <property type="project" value="UniProtKB-UniRule"/>
</dbReference>
<dbReference type="GO" id="GO:0016829">
    <property type="term" value="F:lyase activity"/>
    <property type="evidence" value="ECO:0007669"/>
    <property type="project" value="UniProtKB-KW"/>
</dbReference>
<dbReference type="GO" id="GO:0000105">
    <property type="term" value="P:L-histidine biosynthetic process"/>
    <property type="evidence" value="ECO:0007669"/>
    <property type="project" value="UniProtKB-UniRule"/>
</dbReference>
<dbReference type="CDD" id="cd04731">
    <property type="entry name" value="HisF"/>
    <property type="match status" value="1"/>
</dbReference>
<dbReference type="FunFam" id="3.20.20.70:FF:000006">
    <property type="entry name" value="Imidazole glycerol phosphate synthase subunit HisF"/>
    <property type="match status" value="1"/>
</dbReference>
<dbReference type="Gene3D" id="3.20.20.70">
    <property type="entry name" value="Aldolase class I"/>
    <property type="match status" value="1"/>
</dbReference>
<dbReference type="HAMAP" id="MF_01013">
    <property type="entry name" value="HisF"/>
    <property type="match status" value="1"/>
</dbReference>
<dbReference type="InterPro" id="IPR013785">
    <property type="entry name" value="Aldolase_TIM"/>
</dbReference>
<dbReference type="InterPro" id="IPR006062">
    <property type="entry name" value="His_biosynth"/>
</dbReference>
<dbReference type="InterPro" id="IPR004651">
    <property type="entry name" value="HisF"/>
</dbReference>
<dbReference type="InterPro" id="IPR050064">
    <property type="entry name" value="IGPS_HisA/HisF"/>
</dbReference>
<dbReference type="InterPro" id="IPR011060">
    <property type="entry name" value="RibuloseP-bd_barrel"/>
</dbReference>
<dbReference type="NCBIfam" id="TIGR00735">
    <property type="entry name" value="hisF"/>
    <property type="match status" value="1"/>
</dbReference>
<dbReference type="PANTHER" id="PTHR21235:SF2">
    <property type="entry name" value="IMIDAZOLE GLYCEROL PHOSPHATE SYNTHASE HISHF"/>
    <property type="match status" value="1"/>
</dbReference>
<dbReference type="PANTHER" id="PTHR21235">
    <property type="entry name" value="IMIDAZOLE GLYCEROL PHOSPHATE SYNTHASE SUBUNIT HISF/H IGP SYNTHASE SUBUNIT HISF/H"/>
    <property type="match status" value="1"/>
</dbReference>
<dbReference type="Pfam" id="PF00977">
    <property type="entry name" value="His_biosynth"/>
    <property type="match status" value="1"/>
</dbReference>
<dbReference type="SUPFAM" id="SSF51366">
    <property type="entry name" value="Ribulose-phoshate binding barrel"/>
    <property type="match status" value="1"/>
</dbReference>
<proteinExistence type="inferred from homology"/>
<gene>
    <name evidence="1" type="primary">hisF</name>
    <name type="ordered locus">MAV_3181</name>
</gene>
<feature type="chain" id="PRO_1000063092" description="Imidazole glycerol phosphate synthase subunit HisF">
    <location>
        <begin position="1"/>
        <end position="265"/>
    </location>
</feature>
<feature type="active site" evidence="1">
    <location>
        <position position="17"/>
    </location>
</feature>
<feature type="active site" evidence="1">
    <location>
        <position position="136"/>
    </location>
</feature>
<protein>
    <recommendedName>
        <fullName evidence="1">Imidazole glycerol phosphate synthase subunit HisF</fullName>
        <ecNumber evidence="1">4.3.2.10</ecNumber>
    </recommendedName>
    <alternativeName>
        <fullName evidence="1">IGP synthase cyclase subunit</fullName>
    </alternativeName>
    <alternativeName>
        <fullName evidence="1">IGP synthase subunit HisF</fullName>
    </alternativeName>
    <alternativeName>
        <fullName evidence="1">ImGP synthase subunit HisF</fullName>
        <shortName evidence="1">IGPS subunit HisF</shortName>
    </alternativeName>
</protein>
<name>HIS6_MYCA1</name>
<evidence type="ECO:0000255" key="1">
    <source>
        <dbReference type="HAMAP-Rule" id="MF_01013"/>
    </source>
</evidence>
<organism>
    <name type="scientific">Mycobacterium avium (strain 104)</name>
    <dbReference type="NCBI Taxonomy" id="243243"/>
    <lineage>
        <taxon>Bacteria</taxon>
        <taxon>Bacillati</taxon>
        <taxon>Actinomycetota</taxon>
        <taxon>Actinomycetes</taxon>
        <taxon>Mycobacteriales</taxon>
        <taxon>Mycobacteriaceae</taxon>
        <taxon>Mycobacterium</taxon>
        <taxon>Mycobacterium avium complex (MAC)</taxon>
    </lineage>
</organism>
<keyword id="KW-0028">Amino-acid biosynthesis</keyword>
<keyword id="KW-0963">Cytoplasm</keyword>
<keyword id="KW-0368">Histidine biosynthesis</keyword>
<keyword id="KW-0456">Lyase</keyword>
<sequence>MSPNSSGLAVRVIPCLDVDDGRVVKGVNFENLRDAGDPVELAAVYDAEGADELTFLDVTASSSGRATMLDVVRRTAEQVFIPLTVGGGVRTVADVDVLLRAGADKVSVNTAAIARPELLEEMARQFGSQCIVLSVDARTVPPGAVPTPSGWEVTTHGGRRGTGIDAVEWASRGADLGVGEILLNSMDADGTKAGFDLEMLQAVRSAVTVPVIASGGAGAAEHFAPAIEAGADAVLAASVFHFRELTIGQVKAAMAEAGIPVRMVR</sequence>
<reference key="1">
    <citation type="submission" date="2006-10" db="EMBL/GenBank/DDBJ databases">
        <authorList>
            <person name="Fleischmann R.D."/>
            <person name="Dodson R.J."/>
            <person name="Haft D.H."/>
            <person name="Merkel J.S."/>
            <person name="Nelson W.C."/>
            <person name="Fraser C.M."/>
        </authorList>
    </citation>
    <scope>NUCLEOTIDE SEQUENCE [LARGE SCALE GENOMIC DNA]</scope>
    <source>
        <strain>104</strain>
    </source>
</reference>
<comment type="function">
    <text evidence="1">IGPS catalyzes the conversion of PRFAR and glutamine to IGP, AICAR and glutamate. The HisF subunit catalyzes the cyclization activity that produces IGP and AICAR from PRFAR using the ammonia provided by the HisH subunit.</text>
</comment>
<comment type="catalytic activity">
    <reaction evidence="1">
        <text>5-[(5-phospho-1-deoxy-D-ribulos-1-ylimino)methylamino]-1-(5-phospho-beta-D-ribosyl)imidazole-4-carboxamide + L-glutamine = D-erythro-1-(imidazol-4-yl)glycerol 3-phosphate + 5-amino-1-(5-phospho-beta-D-ribosyl)imidazole-4-carboxamide + L-glutamate + H(+)</text>
        <dbReference type="Rhea" id="RHEA:24793"/>
        <dbReference type="ChEBI" id="CHEBI:15378"/>
        <dbReference type="ChEBI" id="CHEBI:29985"/>
        <dbReference type="ChEBI" id="CHEBI:58278"/>
        <dbReference type="ChEBI" id="CHEBI:58359"/>
        <dbReference type="ChEBI" id="CHEBI:58475"/>
        <dbReference type="ChEBI" id="CHEBI:58525"/>
        <dbReference type="EC" id="4.3.2.10"/>
    </reaction>
</comment>
<comment type="pathway">
    <text evidence="1">Amino-acid biosynthesis; L-histidine biosynthesis; L-histidine from 5-phospho-alpha-D-ribose 1-diphosphate: step 5/9.</text>
</comment>
<comment type="subunit">
    <text evidence="1">Heterodimer of HisH and HisF.</text>
</comment>
<comment type="subcellular location">
    <subcellularLocation>
        <location evidence="1">Cytoplasm</location>
    </subcellularLocation>
</comment>
<comment type="similarity">
    <text evidence="1">Belongs to the HisA/HisF family.</text>
</comment>
<accession>A0QHH6</accession>